<sequence length="251" mass="27912">MLGACLRLLVGALCTVCSLGTARAYSDTSPLLGSNWGSLTHLYTATARNSYHLQIHRDGHVDGTPHQTIYSALMITSEDAGSVVIIGAMTRRFLCMDLRGNIFGSYHFSPENCRFRQWTLENGYDVYLSPKHHYLVSLGRSKRIFQPGTNPPPFSQFLARRNEVPLLHFYTARPRRHTRSAEDPPERDPLNVLKPRPRATPIPVSCSRELPSAEEGGPAASDPLGVLRRGRGDARRGAGGTDRCRPFPRFV</sequence>
<reference key="1">
    <citation type="submission" date="2002-01" db="EMBL/GenBank/DDBJ databases">
        <title>Rattus norvegicus fgf23.</title>
        <authorList>
            <person name="Itoh N."/>
        </authorList>
    </citation>
    <scope>NUCLEOTIDE SEQUENCE [MRNA]</scope>
</reference>
<reference key="2">
    <citation type="journal article" date="2006" name="Nature">
        <title>Klotho converts canonical FGF receptor into a specific receptor for FGF23.</title>
        <authorList>
            <person name="Urakawa I."/>
            <person name="Yamazaki Y."/>
            <person name="Shimada T."/>
            <person name="Iijima K."/>
            <person name="Hasegawa H."/>
            <person name="Okawa K."/>
            <person name="Fujita T."/>
            <person name="Fukumoto S."/>
            <person name="Yamashita T."/>
        </authorList>
    </citation>
    <scope>FUNCTION</scope>
</reference>
<reference key="3">
    <citation type="journal article" date="2007" name="J. Clin. Invest.">
        <title>The parathyroid is a target organ for FGF23 in rats.</title>
        <authorList>
            <person name="Ben-Dov I.Z."/>
            <person name="Galitzer H."/>
            <person name="Lavi-Moshayoff V."/>
            <person name="Goetz R."/>
            <person name="Kuro-o M."/>
            <person name="Mohammadi M."/>
            <person name="Sirkis R."/>
            <person name="Naveh-Many T."/>
            <person name="Silver J."/>
        </authorList>
    </citation>
    <scope>FUNCTION</scope>
    <scope>TISSUE SPECIFICITY</scope>
</reference>
<proteinExistence type="evidence at transcript level"/>
<comment type="function">
    <text evidence="3 6 7">Regulator of phosphate homeostasis (By similarity). Inhibits renal tubular phosphate transport by reducing SLC34A1 levels (By similarity). Regulator of vitamin-D metabolism (By similarity). Negatively regulates osteoblasts differentiation and matrix mineralization (By similarity). Acts directly on the parathyroid to decrease PTH secretion (PubMed:17992255). Up-regulates EGR1 expression in the presence of KL (PubMed:17086194).</text>
</comment>
<comment type="subunit">
    <text evidence="2 3">Interacts with FGFR1, FGFR2, FGFR3 and FGFR4. Affinity between fibroblast growth factors (FGFs) and their receptors is increased by KL and heparan sulfate glycosaminoglycans that function as coreceptors (By similarity).</text>
</comment>
<comment type="subcellular location">
    <subcellularLocation>
        <location evidence="3">Secreted</location>
    </subcellularLocation>
    <text evidence="3">Secretion is dependent on O-glycosylation.</text>
</comment>
<comment type="tissue specificity">
    <text evidence="7">Expressed in the parathyroid.</text>
</comment>
<comment type="PTM">
    <text evidence="3">Following secretion this protein is inactivated by cleavage into a N-terminal fragment and a C-terminal fragment. The processing is effected by proprotein convertases (By similarity).</text>
</comment>
<comment type="PTM">
    <text evidence="3">O-glycosylated at Thr-171 and Thr-178 by GALNT3 and glycosylation of Thr-178 requires previous glycosylation at Thr171. Glycosylation is necessary for secretion; it blocks processing by proprotein convertases when the O-glycan is alpha 2,6-sialylated. Competition between proprotein convertase cleavage and block of cleavage by O-glycosylation determines the level of secreted active FGF23 (By similarity).</text>
</comment>
<comment type="PTM">
    <text evidence="3">Phosphorylation at Ser-180 mediated by FAM20C slows down glycosylation at Thr-178 notably.</text>
</comment>
<comment type="similarity">
    <text evidence="8">Belongs to the heparin-binding growth factors family.</text>
</comment>
<organism>
    <name type="scientific">Rattus norvegicus</name>
    <name type="common">Rat</name>
    <dbReference type="NCBI Taxonomy" id="10116"/>
    <lineage>
        <taxon>Eukaryota</taxon>
        <taxon>Metazoa</taxon>
        <taxon>Chordata</taxon>
        <taxon>Craniata</taxon>
        <taxon>Vertebrata</taxon>
        <taxon>Euteleostomi</taxon>
        <taxon>Mammalia</taxon>
        <taxon>Eutheria</taxon>
        <taxon>Euarchontoglires</taxon>
        <taxon>Glires</taxon>
        <taxon>Rodentia</taxon>
        <taxon>Myomorpha</taxon>
        <taxon>Muroidea</taxon>
        <taxon>Muridae</taxon>
        <taxon>Murinae</taxon>
        <taxon>Rattus</taxon>
    </lineage>
</organism>
<name>FGF23_RAT</name>
<feature type="signal peptide" evidence="4">
    <location>
        <begin position="1"/>
        <end position="24"/>
    </location>
</feature>
<feature type="chain" id="PRO_0000009000" description="Fibroblast growth factor 23">
    <location>
        <begin position="25"/>
        <end position="251"/>
    </location>
</feature>
<feature type="region of interest" description="Disordered" evidence="5">
    <location>
        <begin position="175"/>
        <end position="251"/>
    </location>
</feature>
<feature type="compositionally biased region" description="Basic and acidic residues" evidence="5">
    <location>
        <begin position="179"/>
        <end position="189"/>
    </location>
</feature>
<feature type="modified residue" description="Phosphoserine; by FAM20C" evidence="3">
    <location>
        <position position="180"/>
    </location>
</feature>
<feature type="glycosylation site" description="O-linked (GalNAc) threonine" evidence="3">
    <location>
        <position position="171"/>
    </location>
</feature>
<feature type="glycosylation site" description="O-linked (GalNAc) threonine" evidence="3">
    <location>
        <position position="178"/>
    </location>
</feature>
<feature type="disulfide bond" evidence="1">
    <location>
        <begin position="95"/>
        <end position="113"/>
    </location>
</feature>
<evidence type="ECO:0000250" key="1"/>
<evidence type="ECO:0000250" key="2">
    <source>
        <dbReference type="UniProtKB" id="Q9EPC2"/>
    </source>
</evidence>
<evidence type="ECO:0000250" key="3">
    <source>
        <dbReference type="UniProtKB" id="Q9GZV9"/>
    </source>
</evidence>
<evidence type="ECO:0000255" key="4"/>
<evidence type="ECO:0000256" key="5">
    <source>
        <dbReference type="SAM" id="MobiDB-lite"/>
    </source>
</evidence>
<evidence type="ECO:0000269" key="6">
    <source>
    </source>
</evidence>
<evidence type="ECO:0000269" key="7">
    <source>
    </source>
</evidence>
<evidence type="ECO:0000305" key="8"/>
<protein>
    <recommendedName>
        <fullName>Fibroblast growth factor 23</fullName>
        <shortName>FGF-23</shortName>
    </recommendedName>
</protein>
<gene>
    <name type="primary">Fgf23</name>
</gene>
<dbReference type="EMBL" id="AB078777">
    <property type="protein sequence ID" value="BAB84108.1"/>
    <property type="molecule type" value="mRNA"/>
</dbReference>
<dbReference type="RefSeq" id="NP_570110.1">
    <property type="nucleotide sequence ID" value="NM_130754.2"/>
</dbReference>
<dbReference type="SMR" id="Q8VI82"/>
<dbReference type="FunCoup" id="Q8VI82">
    <property type="interactions" value="429"/>
</dbReference>
<dbReference type="STRING" id="10116.ENSRNOP00000075536"/>
<dbReference type="GlyCosmos" id="Q8VI82">
    <property type="glycosylation" value="1 site, No reported glycans"/>
</dbReference>
<dbReference type="GlyGen" id="Q8VI82">
    <property type="glycosylation" value="2 sites"/>
</dbReference>
<dbReference type="PhosphoSitePlus" id="Q8VI82"/>
<dbReference type="PaxDb" id="10116-ENSRNOP00000026888"/>
<dbReference type="Ensembl" id="ENSRNOT00000107111.1">
    <property type="protein sequence ID" value="ENSRNOP00000087703.1"/>
    <property type="gene ID" value="ENSRNOG00000066556.1"/>
</dbReference>
<dbReference type="GeneID" id="170583"/>
<dbReference type="KEGG" id="rno:170583"/>
<dbReference type="UCSC" id="RGD:620178">
    <property type="organism name" value="rat"/>
</dbReference>
<dbReference type="AGR" id="RGD:620178"/>
<dbReference type="CTD" id="8074"/>
<dbReference type="RGD" id="620178">
    <property type="gene designation" value="Fgf23"/>
</dbReference>
<dbReference type="eggNOG" id="KOG3885">
    <property type="taxonomic scope" value="Eukaryota"/>
</dbReference>
<dbReference type="GeneTree" id="ENSGT00940000160821"/>
<dbReference type="HOGENOM" id="CLU_094251_0_0_1"/>
<dbReference type="InParanoid" id="Q8VI82"/>
<dbReference type="OMA" id="PSTHDPW"/>
<dbReference type="OrthoDB" id="8909943at2759"/>
<dbReference type="PhylomeDB" id="Q8VI82"/>
<dbReference type="TreeFam" id="TF335872"/>
<dbReference type="Reactome" id="R-RNO-109704">
    <property type="pathway name" value="PI3K Cascade"/>
</dbReference>
<dbReference type="Reactome" id="R-RNO-1257604">
    <property type="pathway name" value="PIP3 activates AKT signaling"/>
</dbReference>
<dbReference type="Reactome" id="R-RNO-190322">
    <property type="pathway name" value="FGFR4 ligand binding and activation"/>
</dbReference>
<dbReference type="Reactome" id="R-RNO-190372">
    <property type="pathway name" value="FGFR3c ligand binding and activation"/>
</dbReference>
<dbReference type="Reactome" id="R-RNO-190373">
    <property type="pathway name" value="FGFR1c ligand binding and activation"/>
</dbReference>
<dbReference type="Reactome" id="R-RNO-190374">
    <property type="pathway name" value="FGFR1c and Klotho ligand binding and activation"/>
</dbReference>
<dbReference type="Reactome" id="R-RNO-190375">
    <property type="pathway name" value="FGFR2c ligand binding and activation"/>
</dbReference>
<dbReference type="Reactome" id="R-RNO-381426">
    <property type="pathway name" value="Regulation of Insulin-like Growth Factor (IGF) transport and uptake by Insulin-like Growth Factor Binding Proteins (IGFBPs)"/>
</dbReference>
<dbReference type="Reactome" id="R-RNO-5654219">
    <property type="pathway name" value="Phospholipase C-mediated cascade: FGFR1"/>
</dbReference>
<dbReference type="Reactome" id="R-RNO-5654221">
    <property type="pathway name" value="Phospholipase C-mediated cascade, FGFR2"/>
</dbReference>
<dbReference type="Reactome" id="R-RNO-5654227">
    <property type="pathway name" value="Phospholipase C-mediated cascade, FGFR3"/>
</dbReference>
<dbReference type="Reactome" id="R-RNO-5654228">
    <property type="pathway name" value="Phospholipase C-mediated cascade, FGFR4"/>
</dbReference>
<dbReference type="Reactome" id="R-RNO-5654687">
    <property type="pathway name" value="Downstream signaling of activated FGFR1"/>
</dbReference>
<dbReference type="Reactome" id="R-RNO-5654688">
    <property type="pathway name" value="SHC-mediated cascade:FGFR1"/>
</dbReference>
<dbReference type="Reactome" id="R-RNO-5654689">
    <property type="pathway name" value="PI-3K cascade:FGFR1"/>
</dbReference>
<dbReference type="Reactome" id="R-RNO-5654693">
    <property type="pathway name" value="FRS-mediated FGFR1 signaling"/>
</dbReference>
<dbReference type="Reactome" id="R-RNO-5654695">
    <property type="pathway name" value="PI-3K cascade:FGFR2"/>
</dbReference>
<dbReference type="Reactome" id="R-RNO-5654699">
    <property type="pathway name" value="SHC-mediated cascade:FGFR2"/>
</dbReference>
<dbReference type="Reactome" id="R-RNO-5654700">
    <property type="pathway name" value="FRS-mediated FGFR2 signaling"/>
</dbReference>
<dbReference type="Reactome" id="R-RNO-5654704">
    <property type="pathway name" value="SHC-mediated cascade:FGFR3"/>
</dbReference>
<dbReference type="Reactome" id="R-RNO-5654706">
    <property type="pathway name" value="FRS-mediated FGFR3 signaling"/>
</dbReference>
<dbReference type="Reactome" id="R-RNO-5654710">
    <property type="pathway name" value="PI-3K cascade:FGFR3"/>
</dbReference>
<dbReference type="Reactome" id="R-RNO-5654712">
    <property type="pathway name" value="FRS-mediated FGFR4 signaling"/>
</dbReference>
<dbReference type="Reactome" id="R-RNO-5654719">
    <property type="pathway name" value="SHC-mediated cascade:FGFR4"/>
</dbReference>
<dbReference type="Reactome" id="R-RNO-5654720">
    <property type="pathway name" value="PI-3K cascade:FGFR4"/>
</dbReference>
<dbReference type="Reactome" id="R-RNO-5654726">
    <property type="pathway name" value="Negative regulation of FGFR1 signaling"/>
</dbReference>
<dbReference type="Reactome" id="R-RNO-5654727">
    <property type="pathway name" value="Negative regulation of FGFR2 signaling"/>
</dbReference>
<dbReference type="Reactome" id="R-RNO-5654732">
    <property type="pathway name" value="Negative regulation of FGFR3 signaling"/>
</dbReference>
<dbReference type="Reactome" id="R-RNO-5654733">
    <property type="pathway name" value="Negative regulation of FGFR4 signaling"/>
</dbReference>
<dbReference type="Reactome" id="R-RNO-5658623">
    <property type="pathway name" value="FGFRL1 modulation of FGFR1 signaling"/>
</dbReference>
<dbReference type="Reactome" id="R-RNO-5673001">
    <property type="pathway name" value="RAF/MAP kinase cascade"/>
</dbReference>
<dbReference type="Reactome" id="R-RNO-6811558">
    <property type="pathway name" value="PI5P, PP2A and IER3 Regulate PI3K/AKT Signaling"/>
</dbReference>
<dbReference type="Reactome" id="R-RNO-8957275">
    <property type="pathway name" value="Post-translational protein phosphorylation"/>
</dbReference>
<dbReference type="PRO" id="PR:Q8VI82"/>
<dbReference type="Proteomes" id="UP000002494">
    <property type="component" value="Chromosome 4"/>
</dbReference>
<dbReference type="Bgee" id="ENSRNOG00000052205">
    <property type="expression patterns" value="Expressed in thymus and 3 other cell types or tissues"/>
</dbReference>
<dbReference type="GO" id="GO:0005737">
    <property type="term" value="C:cytoplasm"/>
    <property type="evidence" value="ECO:0000318"/>
    <property type="project" value="GO_Central"/>
</dbReference>
<dbReference type="GO" id="GO:0005615">
    <property type="term" value="C:extracellular space"/>
    <property type="evidence" value="ECO:0000314"/>
    <property type="project" value="RGD"/>
</dbReference>
<dbReference type="GO" id="GO:0005104">
    <property type="term" value="F:fibroblast growth factor receptor binding"/>
    <property type="evidence" value="ECO:0000266"/>
    <property type="project" value="RGD"/>
</dbReference>
<dbReference type="GO" id="GO:0008083">
    <property type="term" value="F:growth factor activity"/>
    <property type="evidence" value="ECO:0000318"/>
    <property type="project" value="GO_Central"/>
</dbReference>
<dbReference type="GO" id="GO:0005105">
    <property type="term" value="F:type 1 fibroblast growth factor receptor binding"/>
    <property type="evidence" value="ECO:0000266"/>
    <property type="project" value="RGD"/>
</dbReference>
<dbReference type="GO" id="GO:0055074">
    <property type="term" value="P:calcium ion homeostasis"/>
    <property type="evidence" value="ECO:0000266"/>
    <property type="project" value="RGD"/>
</dbReference>
<dbReference type="GO" id="GO:0071354">
    <property type="term" value="P:cellular response to interleukin-6"/>
    <property type="evidence" value="ECO:0000270"/>
    <property type="project" value="RGD"/>
</dbReference>
<dbReference type="GO" id="GO:0044320">
    <property type="term" value="P:cellular response to leptin stimulus"/>
    <property type="evidence" value="ECO:0000270"/>
    <property type="project" value="RGD"/>
</dbReference>
<dbReference type="GO" id="GO:0071374">
    <property type="term" value="P:cellular response to parathyroid hormone stimulus"/>
    <property type="evidence" value="ECO:0000270"/>
    <property type="project" value="RGD"/>
</dbReference>
<dbReference type="GO" id="GO:0071305">
    <property type="term" value="P:cellular response to vitamin D"/>
    <property type="evidence" value="ECO:0000270"/>
    <property type="project" value="RGD"/>
</dbReference>
<dbReference type="GO" id="GO:0070371">
    <property type="term" value="P:ERK1 and ERK2 cascade"/>
    <property type="evidence" value="ECO:0000266"/>
    <property type="project" value="RGD"/>
</dbReference>
<dbReference type="GO" id="GO:0008543">
    <property type="term" value="P:fibroblast growth factor receptor signaling pathway"/>
    <property type="evidence" value="ECO:0000266"/>
    <property type="project" value="RGD"/>
</dbReference>
<dbReference type="GO" id="GO:0030643">
    <property type="term" value="P:intracellular phosphate ion homeostasis"/>
    <property type="evidence" value="ECO:0000266"/>
    <property type="project" value="RGD"/>
</dbReference>
<dbReference type="GO" id="GO:0000165">
    <property type="term" value="P:MAPK cascade"/>
    <property type="evidence" value="ECO:0000266"/>
    <property type="project" value="RGD"/>
</dbReference>
<dbReference type="GO" id="GO:0030502">
    <property type="term" value="P:negative regulation of bone mineralization"/>
    <property type="evidence" value="ECO:0000266"/>
    <property type="project" value="RGD"/>
</dbReference>
<dbReference type="GO" id="GO:0046888">
    <property type="term" value="P:negative regulation of hormone secretion"/>
    <property type="evidence" value="ECO:0000314"/>
    <property type="project" value="UniProtKB"/>
</dbReference>
<dbReference type="GO" id="GO:0045668">
    <property type="term" value="P:negative regulation of osteoblast differentiation"/>
    <property type="evidence" value="ECO:0000266"/>
    <property type="project" value="RGD"/>
</dbReference>
<dbReference type="GO" id="GO:0022008">
    <property type="term" value="P:neurogenesis"/>
    <property type="evidence" value="ECO:0000318"/>
    <property type="project" value="GO_Central"/>
</dbReference>
<dbReference type="GO" id="GO:0055062">
    <property type="term" value="P:phosphate ion homeostasis"/>
    <property type="evidence" value="ECO:0000266"/>
    <property type="project" value="RGD"/>
</dbReference>
<dbReference type="GO" id="GO:0008284">
    <property type="term" value="P:positive regulation of cell population proliferation"/>
    <property type="evidence" value="ECO:0000318"/>
    <property type="project" value="GO_Central"/>
</dbReference>
<dbReference type="GO" id="GO:0045893">
    <property type="term" value="P:positive regulation of DNA-templated transcription"/>
    <property type="evidence" value="ECO:0000266"/>
    <property type="project" value="RGD"/>
</dbReference>
<dbReference type="GO" id="GO:0070374">
    <property type="term" value="P:positive regulation of ERK1 and ERK2 cascade"/>
    <property type="evidence" value="ECO:0000266"/>
    <property type="project" value="RGD"/>
</dbReference>
<dbReference type="GO" id="GO:0043410">
    <property type="term" value="P:positive regulation of MAPK cascade"/>
    <property type="evidence" value="ECO:0000318"/>
    <property type="project" value="GO_Central"/>
</dbReference>
<dbReference type="GO" id="GO:0090080">
    <property type="term" value="P:positive regulation of MAPKKK cascade by fibroblast growth factor receptor signaling pathway"/>
    <property type="evidence" value="ECO:0000266"/>
    <property type="project" value="RGD"/>
</dbReference>
<dbReference type="GO" id="GO:0030500">
    <property type="term" value="P:regulation of bone mineralization"/>
    <property type="evidence" value="ECO:0000266"/>
    <property type="project" value="RGD"/>
</dbReference>
<dbReference type="GO" id="GO:0030334">
    <property type="term" value="P:regulation of cell migration"/>
    <property type="evidence" value="ECO:0000318"/>
    <property type="project" value="GO_Central"/>
</dbReference>
<dbReference type="GO" id="GO:0010966">
    <property type="term" value="P:regulation of phosphate transport"/>
    <property type="evidence" value="ECO:0000266"/>
    <property type="project" value="RGD"/>
</dbReference>
<dbReference type="GO" id="GO:0032026">
    <property type="term" value="P:response to magnesium ion"/>
    <property type="evidence" value="ECO:0000270"/>
    <property type="project" value="RGD"/>
</dbReference>
<dbReference type="GO" id="GO:1904383">
    <property type="term" value="P:response to sodium phosphate"/>
    <property type="evidence" value="ECO:0000270"/>
    <property type="project" value="RGD"/>
</dbReference>
<dbReference type="GO" id="GO:0042369">
    <property type="term" value="P:vitamin D catabolic process"/>
    <property type="evidence" value="ECO:0000266"/>
    <property type="project" value="RGD"/>
</dbReference>
<dbReference type="GO" id="GO:0042359">
    <property type="term" value="P:vitamin D metabolic process"/>
    <property type="evidence" value="ECO:0000270"/>
    <property type="project" value="RGD"/>
</dbReference>
<dbReference type="Gene3D" id="2.80.10.50">
    <property type="match status" value="1"/>
</dbReference>
<dbReference type="InterPro" id="IPR002209">
    <property type="entry name" value="Fibroblast_GF_fam"/>
</dbReference>
<dbReference type="InterPro" id="IPR008996">
    <property type="entry name" value="IL1/FGF"/>
</dbReference>
<dbReference type="PANTHER" id="PTHR11486">
    <property type="entry name" value="FIBROBLAST GROWTH FACTOR"/>
    <property type="match status" value="1"/>
</dbReference>
<dbReference type="Pfam" id="PF00167">
    <property type="entry name" value="FGF"/>
    <property type="match status" value="1"/>
</dbReference>
<dbReference type="SMART" id="SM00442">
    <property type="entry name" value="FGF"/>
    <property type="match status" value="1"/>
</dbReference>
<dbReference type="SUPFAM" id="SSF50353">
    <property type="entry name" value="Cytokine"/>
    <property type="match status" value="1"/>
</dbReference>
<dbReference type="PROSITE" id="PS00247">
    <property type="entry name" value="HBGF_FGF"/>
    <property type="match status" value="1"/>
</dbReference>
<accession>Q8VI82</accession>
<keyword id="KW-0221">Differentiation</keyword>
<keyword id="KW-1015">Disulfide bond</keyword>
<keyword id="KW-0325">Glycoprotein</keyword>
<keyword id="KW-0339">Growth factor</keyword>
<keyword id="KW-0597">Phosphoprotein</keyword>
<keyword id="KW-1185">Reference proteome</keyword>
<keyword id="KW-0964">Secreted</keyword>
<keyword id="KW-0732">Signal</keyword>